<gene>
    <name evidence="5" type="primary">mrpl23</name>
    <name type="ORF">SPBC16G5.04</name>
</gene>
<comment type="function">
    <text evidence="1">Component of the mitochondrial ribosome (mitoribosome), a dedicated translation machinery responsible for the synthesis of mitochondrial genome-encoded proteins, including at least some of the essential transmembrane subunits of the mitochondrial respiratory chain. The mitoribosomes are attached to the mitochondrial inner membrane and translation products are cotranslationally integrated into the membrane.</text>
</comment>
<comment type="subunit">
    <text evidence="1">Component of the mitochondrial large ribosomal subunit (mt-LSU). Mature yeast 74S mitochondrial ribosomes consist of a small (37S) and a large (54S) subunit. The 37S small subunit contains a 15S ribosomal RNA (15S mt-rRNA) and at least 32 different proteins. The 54S large subunit contains a 21S rRNA (21S mt-rRNA) and at least 45 different proteins.</text>
</comment>
<comment type="subcellular location">
    <subcellularLocation>
        <location evidence="3">Mitochondrion</location>
    </subcellularLocation>
</comment>
<comment type="similarity">
    <text evidence="2">Belongs to the universal ribosomal protein uL13 family.</text>
</comment>
<protein>
    <recommendedName>
        <fullName evidence="4">Large ribosomal subunit protein uL13m</fullName>
    </recommendedName>
    <alternativeName>
        <fullName>54S ribosomal protein L23, mitochondrial</fullName>
    </alternativeName>
</protein>
<organism>
    <name type="scientific">Schizosaccharomyces pombe (strain 972 / ATCC 24843)</name>
    <name type="common">Fission yeast</name>
    <dbReference type="NCBI Taxonomy" id="284812"/>
    <lineage>
        <taxon>Eukaryota</taxon>
        <taxon>Fungi</taxon>
        <taxon>Dikarya</taxon>
        <taxon>Ascomycota</taxon>
        <taxon>Taphrinomycotina</taxon>
        <taxon>Schizosaccharomycetes</taxon>
        <taxon>Schizosaccharomycetales</taxon>
        <taxon>Schizosaccharomycetaceae</taxon>
        <taxon>Schizosaccharomyces</taxon>
    </lineage>
</organism>
<feature type="transit peptide" description="Mitochondrion" evidence="2">
    <location>
        <begin position="1"/>
        <end position="29"/>
    </location>
</feature>
<feature type="chain" id="PRO_0000314627" description="Large ribosomal subunit protein uL13m">
    <location>
        <begin position="30"/>
        <end position="157"/>
    </location>
</feature>
<reference evidence="5" key="1">
    <citation type="journal article" date="2002" name="Nature">
        <title>The genome sequence of Schizosaccharomyces pombe.</title>
        <authorList>
            <person name="Wood V."/>
            <person name="Gwilliam R."/>
            <person name="Rajandream M.A."/>
            <person name="Lyne M.H."/>
            <person name="Lyne R."/>
            <person name="Stewart A."/>
            <person name="Sgouros J.G."/>
            <person name="Peat N."/>
            <person name="Hayles J."/>
            <person name="Baker S.G."/>
            <person name="Basham D."/>
            <person name="Bowman S."/>
            <person name="Brooks K."/>
            <person name="Brown D."/>
            <person name="Brown S."/>
            <person name="Chillingworth T."/>
            <person name="Churcher C.M."/>
            <person name="Collins M."/>
            <person name="Connor R."/>
            <person name="Cronin A."/>
            <person name="Davis P."/>
            <person name="Feltwell T."/>
            <person name="Fraser A."/>
            <person name="Gentles S."/>
            <person name="Goble A."/>
            <person name="Hamlin N."/>
            <person name="Harris D.E."/>
            <person name="Hidalgo J."/>
            <person name="Hodgson G."/>
            <person name="Holroyd S."/>
            <person name="Hornsby T."/>
            <person name="Howarth S."/>
            <person name="Huckle E.J."/>
            <person name="Hunt S."/>
            <person name="Jagels K."/>
            <person name="James K.D."/>
            <person name="Jones L."/>
            <person name="Jones M."/>
            <person name="Leather S."/>
            <person name="McDonald S."/>
            <person name="McLean J."/>
            <person name="Mooney P."/>
            <person name="Moule S."/>
            <person name="Mungall K.L."/>
            <person name="Murphy L.D."/>
            <person name="Niblett D."/>
            <person name="Odell C."/>
            <person name="Oliver K."/>
            <person name="O'Neil S."/>
            <person name="Pearson D."/>
            <person name="Quail M.A."/>
            <person name="Rabbinowitsch E."/>
            <person name="Rutherford K.M."/>
            <person name="Rutter S."/>
            <person name="Saunders D."/>
            <person name="Seeger K."/>
            <person name="Sharp S."/>
            <person name="Skelton J."/>
            <person name="Simmonds M.N."/>
            <person name="Squares R."/>
            <person name="Squares S."/>
            <person name="Stevens K."/>
            <person name="Taylor K."/>
            <person name="Taylor R.G."/>
            <person name="Tivey A."/>
            <person name="Walsh S.V."/>
            <person name="Warren T."/>
            <person name="Whitehead S."/>
            <person name="Woodward J.R."/>
            <person name="Volckaert G."/>
            <person name="Aert R."/>
            <person name="Robben J."/>
            <person name="Grymonprez B."/>
            <person name="Weltjens I."/>
            <person name="Vanstreels E."/>
            <person name="Rieger M."/>
            <person name="Schaefer M."/>
            <person name="Mueller-Auer S."/>
            <person name="Gabel C."/>
            <person name="Fuchs M."/>
            <person name="Duesterhoeft A."/>
            <person name="Fritzc C."/>
            <person name="Holzer E."/>
            <person name="Moestl D."/>
            <person name="Hilbert H."/>
            <person name="Borzym K."/>
            <person name="Langer I."/>
            <person name="Beck A."/>
            <person name="Lehrach H."/>
            <person name="Reinhardt R."/>
            <person name="Pohl T.M."/>
            <person name="Eger P."/>
            <person name="Zimmermann W."/>
            <person name="Wedler H."/>
            <person name="Wambutt R."/>
            <person name="Purnelle B."/>
            <person name="Goffeau A."/>
            <person name="Cadieu E."/>
            <person name="Dreano S."/>
            <person name="Gloux S."/>
            <person name="Lelaure V."/>
            <person name="Mottier S."/>
            <person name="Galibert F."/>
            <person name="Aves S.J."/>
            <person name="Xiang Z."/>
            <person name="Hunt C."/>
            <person name="Moore K."/>
            <person name="Hurst S.M."/>
            <person name="Lucas M."/>
            <person name="Rochet M."/>
            <person name="Gaillardin C."/>
            <person name="Tallada V.A."/>
            <person name="Garzon A."/>
            <person name="Thode G."/>
            <person name="Daga R.R."/>
            <person name="Cruzado L."/>
            <person name="Jimenez J."/>
            <person name="Sanchez M."/>
            <person name="del Rey F."/>
            <person name="Benito J."/>
            <person name="Dominguez A."/>
            <person name="Revuelta J.L."/>
            <person name="Moreno S."/>
            <person name="Armstrong J."/>
            <person name="Forsburg S.L."/>
            <person name="Cerutti L."/>
            <person name="Lowe T."/>
            <person name="McCombie W.R."/>
            <person name="Paulsen I."/>
            <person name="Potashkin J."/>
            <person name="Shpakovski G.V."/>
            <person name="Ussery D."/>
            <person name="Barrell B.G."/>
            <person name="Nurse P."/>
        </authorList>
    </citation>
    <scope>NUCLEOTIDE SEQUENCE [LARGE SCALE GENOMIC DNA]</scope>
    <source>
        <strain>972 / ATCC 24843</strain>
    </source>
</reference>
<reference evidence="4" key="2">
    <citation type="journal article" date="2006" name="Nat. Biotechnol.">
        <title>ORFeome cloning and global analysis of protein localization in the fission yeast Schizosaccharomyces pombe.</title>
        <authorList>
            <person name="Matsuyama A."/>
            <person name="Arai R."/>
            <person name="Yashiroda Y."/>
            <person name="Shirai A."/>
            <person name="Kamata A."/>
            <person name="Sekido S."/>
            <person name="Kobayashi Y."/>
            <person name="Hashimoto A."/>
            <person name="Hamamoto M."/>
            <person name="Hiraoka Y."/>
            <person name="Horinouchi S."/>
            <person name="Yoshida M."/>
        </authorList>
    </citation>
    <scope>SUBCELLULAR LOCATION [LARGE SCALE ANALYSIS]</scope>
</reference>
<accession>O60118</accession>
<dbReference type="EMBL" id="CU329671">
    <property type="protein sequence ID" value="CAA19024.1"/>
    <property type="molecule type" value="Genomic_DNA"/>
</dbReference>
<dbReference type="PIR" id="T39596">
    <property type="entry name" value="T39596"/>
</dbReference>
<dbReference type="RefSeq" id="NP_596753.1">
    <property type="nucleotide sequence ID" value="NM_001023773.2"/>
</dbReference>
<dbReference type="SMR" id="O60118"/>
<dbReference type="BioGRID" id="276626">
    <property type="interactions" value="1"/>
</dbReference>
<dbReference type="ComplexPortal" id="CPX-10323">
    <property type="entry name" value="54S mitochondrial large ribosomal subunit"/>
</dbReference>
<dbReference type="FunCoup" id="O60118">
    <property type="interactions" value="358"/>
</dbReference>
<dbReference type="STRING" id="284812.O60118"/>
<dbReference type="PaxDb" id="4896-SPBC16G5.04.1"/>
<dbReference type="EnsemblFungi" id="SPBC16G5.04.1">
    <property type="protein sequence ID" value="SPBC16G5.04.1:pep"/>
    <property type="gene ID" value="SPBC16G5.04"/>
</dbReference>
<dbReference type="GeneID" id="2540088"/>
<dbReference type="KEGG" id="spo:2540088"/>
<dbReference type="PomBase" id="SPBC16G5.04">
    <property type="gene designation" value="mrpl23"/>
</dbReference>
<dbReference type="VEuPathDB" id="FungiDB:SPBC16G5.04"/>
<dbReference type="eggNOG" id="KOG3203">
    <property type="taxonomic scope" value="Eukaryota"/>
</dbReference>
<dbReference type="HOGENOM" id="CLU_082184_1_1_1"/>
<dbReference type="InParanoid" id="O60118"/>
<dbReference type="OMA" id="HKPIYTP"/>
<dbReference type="PhylomeDB" id="O60118"/>
<dbReference type="PRO" id="PR:O60118"/>
<dbReference type="Proteomes" id="UP000002485">
    <property type="component" value="Chromosome II"/>
</dbReference>
<dbReference type="GO" id="GO:0005762">
    <property type="term" value="C:mitochondrial large ribosomal subunit"/>
    <property type="evidence" value="ECO:0000318"/>
    <property type="project" value="GO_Central"/>
</dbReference>
<dbReference type="GO" id="GO:0005739">
    <property type="term" value="C:mitochondrion"/>
    <property type="evidence" value="ECO:0007005"/>
    <property type="project" value="PomBase"/>
</dbReference>
<dbReference type="GO" id="GO:0005840">
    <property type="term" value="C:ribosome"/>
    <property type="evidence" value="ECO:0000318"/>
    <property type="project" value="GO_Central"/>
</dbReference>
<dbReference type="GO" id="GO:0003729">
    <property type="term" value="F:mRNA binding"/>
    <property type="evidence" value="ECO:0000318"/>
    <property type="project" value="GO_Central"/>
</dbReference>
<dbReference type="GO" id="GO:0003735">
    <property type="term" value="F:structural constituent of ribosome"/>
    <property type="evidence" value="ECO:0000318"/>
    <property type="project" value="GO_Central"/>
</dbReference>
<dbReference type="GO" id="GO:0032543">
    <property type="term" value="P:mitochondrial translation"/>
    <property type="evidence" value="ECO:0000250"/>
    <property type="project" value="PomBase"/>
</dbReference>
<dbReference type="GO" id="GO:0017148">
    <property type="term" value="P:negative regulation of translation"/>
    <property type="evidence" value="ECO:0000318"/>
    <property type="project" value="GO_Central"/>
</dbReference>
<dbReference type="CDD" id="cd00392">
    <property type="entry name" value="Ribosomal_L13"/>
    <property type="match status" value="1"/>
</dbReference>
<dbReference type="FunFam" id="3.90.1180.10:FF:000007">
    <property type="entry name" value="50S ribosomal protein L13"/>
    <property type="match status" value="1"/>
</dbReference>
<dbReference type="Gene3D" id="3.90.1180.10">
    <property type="entry name" value="Ribosomal protein L13"/>
    <property type="match status" value="1"/>
</dbReference>
<dbReference type="HAMAP" id="MF_01366">
    <property type="entry name" value="Ribosomal_uL13"/>
    <property type="match status" value="1"/>
</dbReference>
<dbReference type="InterPro" id="IPR005822">
    <property type="entry name" value="Ribosomal_uL13"/>
</dbReference>
<dbReference type="InterPro" id="IPR005823">
    <property type="entry name" value="Ribosomal_uL13_bac-type"/>
</dbReference>
<dbReference type="InterPro" id="IPR036899">
    <property type="entry name" value="Ribosomal_uL13_sf"/>
</dbReference>
<dbReference type="NCBIfam" id="TIGR01066">
    <property type="entry name" value="rplM_bact"/>
    <property type="match status" value="1"/>
</dbReference>
<dbReference type="PANTHER" id="PTHR11545:SF2">
    <property type="entry name" value="LARGE RIBOSOMAL SUBUNIT PROTEIN UL13M"/>
    <property type="match status" value="1"/>
</dbReference>
<dbReference type="PANTHER" id="PTHR11545">
    <property type="entry name" value="RIBOSOMAL PROTEIN L13"/>
    <property type="match status" value="1"/>
</dbReference>
<dbReference type="Pfam" id="PF00572">
    <property type="entry name" value="Ribosomal_L13"/>
    <property type="match status" value="1"/>
</dbReference>
<dbReference type="PIRSF" id="PIRSF002181">
    <property type="entry name" value="Ribosomal_L13"/>
    <property type="match status" value="1"/>
</dbReference>
<dbReference type="SUPFAM" id="SSF52161">
    <property type="entry name" value="Ribosomal protein L13"/>
    <property type="match status" value="1"/>
</dbReference>
<evidence type="ECO:0000250" key="1">
    <source>
        <dbReference type="UniProtKB" id="Q12487"/>
    </source>
</evidence>
<evidence type="ECO:0000255" key="2"/>
<evidence type="ECO:0000269" key="3">
    <source>
    </source>
</evidence>
<evidence type="ECO:0000305" key="4"/>
<evidence type="ECO:0000312" key="5">
    <source>
        <dbReference type="EMBL" id="CAA19024.1"/>
    </source>
</evidence>
<name>RM23_SCHPO</name>
<proteinExistence type="inferred from homology"/>
<keyword id="KW-0496">Mitochondrion</keyword>
<keyword id="KW-1185">Reference proteome</keyword>
<keyword id="KW-0687">Ribonucleoprotein</keyword>
<keyword id="KW-0689">Ribosomal protein</keyword>
<keyword id="KW-0809">Transit peptide</keyword>
<sequence>MSTLNGQTALAYAKVWHHVSAKNVPLGRLASQIATTLMGKHKPIYHPAADCGDVVVVTDCSEIGISGRKLENHKYYSHSGQPGHLKEWTMEEMAAKRGHKDLLRRAVGGMLPRNKLWDRRMKRLYIYDGAEHPYKANIFRSYHNPVSSQIAKELFSK</sequence>